<keyword id="KW-0255">Endonuclease</keyword>
<keyword id="KW-0378">Hydrolase</keyword>
<keyword id="KW-0540">Nuclease</keyword>
<keyword id="KW-0694">RNA-binding</keyword>
<keyword id="KW-0819">tRNA processing</keyword>
<protein>
    <recommendedName>
        <fullName evidence="1">Ribonuclease P protein component</fullName>
        <shortName evidence="1">RNase P protein</shortName>
        <shortName evidence="1">RNaseP protein</shortName>
        <ecNumber evidence="1">3.1.26.5</ecNumber>
    </recommendedName>
    <alternativeName>
        <fullName evidence="1">Protein C5</fullName>
    </alternativeName>
</protein>
<sequence>MVKLAFPRELRLLTPSQFTFVFQQPQRAGTPQITILGRLNSLGHPRIGLTVAKKNVRRAHERNRIKRLTRESFRLRQHELPAMDFVVVAKKGVADLDNRALSEALEKLWRRHCRLARGS</sequence>
<proteinExistence type="inferred from homology"/>
<reference key="1">
    <citation type="journal article" date="2008" name="J. Bacteriol.">
        <title>The complete genome sequence of Escherichia coli DH10B: insights into the biology of a laboratory workhorse.</title>
        <authorList>
            <person name="Durfee T."/>
            <person name="Nelson R."/>
            <person name="Baldwin S."/>
            <person name="Plunkett G. III"/>
            <person name="Burland V."/>
            <person name="Mau B."/>
            <person name="Petrosino J.F."/>
            <person name="Qin X."/>
            <person name="Muzny D.M."/>
            <person name="Ayele M."/>
            <person name="Gibbs R.A."/>
            <person name="Csorgo B."/>
            <person name="Posfai G."/>
            <person name="Weinstock G.M."/>
            <person name="Blattner F.R."/>
        </authorList>
    </citation>
    <scope>NUCLEOTIDE SEQUENCE [LARGE SCALE GENOMIC DNA]</scope>
    <source>
        <strain>K12 / DH10B</strain>
    </source>
</reference>
<name>RNPA_ECODH</name>
<dbReference type="EC" id="3.1.26.5" evidence="1"/>
<dbReference type="EMBL" id="CP000948">
    <property type="protein sequence ID" value="ACB04747.1"/>
    <property type="molecule type" value="Genomic_DNA"/>
</dbReference>
<dbReference type="RefSeq" id="WP_000239730.1">
    <property type="nucleotide sequence ID" value="NC_010473.1"/>
</dbReference>
<dbReference type="SMR" id="B1X9T2"/>
<dbReference type="GeneID" id="93778446"/>
<dbReference type="KEGG" id="ecd:ECDH10B_3890"/>
<dbReference type="HOGENOM" id="CLU_117179_11_0_6"/>
<dbReference type="GO" id="GO:0030677">
    <property type="term" value="C:ribonuclease P complex"/>
    <property type="evidence" value="ECO:0007669"/>
    <property type="project" value="TreeGrafter"/>
</dbReference>
<dbReference type="GO" id="GO:0042781">
    <property type="term" value="F:3'-tRNA processing endoribonuclease activity"/>
    <property type="evidence" value="ECO:0007669"/>
    <property type="project" value="TreeGrafter"/>
</dbReference>
<dbReference type="GO" id="GO:0004526">
    <property type="term" value="F:ribonuclease P activity"/>
    <property type="evidence" value="ECO:0007669"/>
    <property type="project" value="UniProtKB-UniRule"/>
</dbReference>
<dbReference type="GO" id="GO:0000049">
    <property type="term" value="F:tRNA binding"/>
    <property type="evidence" value="ECO:0007669"/>
    <property type="project" value="UniProtKB-UniRule"/>
</dbReference>
<dbReference type="GO" id="GO:0001682">
    <property type="term" value="P:tRNA 5'-leader removal"/>
    <property type="evidence" value="ECO:0007669"/>
    <property type="project" value="UniProtKB-UniRule"/>
</dbReference>
<dbReference type="FunFam" id="3.30.230.10:FF:000016">
    <property type="entry name" value="Ribonuclease P protein component"/>
    <property type="match status" value="1"/>
</dbReference>
<dbReference type="Gene3D" id="3.30.230.10">
    <property type="match status" value="1"/>
</dbReference>
<dbReference type="HAMAP" id="MF_00227">
    <property type="entry name" value="RNase_P"/>
    <property type="match status" value="1"/>
</dbReference>
<dbReference type="InterPro" id="IPR020568">
    <property type="entry name" value="Ribosomal_Su5_D2-typ_SF"/>
</dbReference>
<dbReference type="InterPro" id="IPR014721">
    <property type="entry name" value="Ribsml_uS5_D2-typ_fold_subgr"/>
</dbReference>
<dbReference type="InterPro" id="IPR000100">
    <property type="entry name" value="RNase_P"/>
</dbReference>
<dbReference type="InterPro" id="IPR020539">
    <property type="entry name" value="RNase_P_CS"/>
</dbReference>
<dbReference type="NCBIfam" id="TIGR00188">
    <property type="entry name" value="rnpA"/>
    <property type="match status" value="1"/>
</dbReference>
<dbReference type="PANTHER" id="PTHR33992">
    <property type="entry name" value="RIBONUCLEASE P PROTEIN COMPONENT"/>
    <property type="match status" value="1"/>
</dbReference>
<dbReference type="PANTHER" id="PTHR33992:SF1">
    <property type="entry name" value="RIBONUCLEASE P PROTEIN COMPONENT"/>
    <property type="match status" value="1"/>
</dbReference>
<dbReference type="Pfam" id="PF00825">
    <property type="entry name" value="Ribonuclease_P"/>
    <property type="match status" value="1"/>
</dbReference>
<dbReference type="SUPFAM" id="SSF54211">
    <property type="entry name" value="Ribosomal protein S5 domain 2-like"/>
    <property type="match status" value="1"/>
</dbReference>
<dbReference type="PROSITE" id="PS00648">
    <property type="entry name" value="RIBONUCLEASE_P"/>
    <property type="match status" value="1"/>
</dbReference>
<organism>
    <name type="scientific">Escherichia coli (strain K12 / DH10B)</name>
    <dbReference type="NCBI Taxonomy" id="316385"/>
    <lineage>
        <taxon>Bacteria</taxon>
        <taxon>Pseudomonadati</taxon>
        <taxon>Pseudomonadota</taxon>
        <taxon>Gammaproteobacteria</taxon>
        <taxon>Enterobacterales</taxon>
        <taxon>Enterobacteriaceae</taxon>
        <taxon>Escherichia</taxon>
    </lineage>
</organism>
<feature type="chain" id="PRO_1000100357" description="Ribonuclease P protein component">
    <location>
        <begin position="1"/>
        <end position="119"/>
    </location>
</feature>
<comment type="function">
    <text evidence="1">RNaseP catalyzes the removal of the 5'-leader sequence from pre-tRNA to produce the mature 5'-terminus. It can also cleave other RNA substrates such as 4.5S RNA. The protein component plays an auxiliary but essential role in vivo by binding to the 5'-leader sequence and broadening the substrate specificity of the ribozyme.</text>
</comment>
<comment type="catalytic activity">
    <reaction evidence="1">
        <text>Endonucleolytic cleavage of RNA, removing 5'-extranucleotides from tRNA precursor.</text>
        <dbReference type="EC" id="3.1.26.5"/>
    </reaction>
</comment>
<comment type="subunit">
    <text evidence="1">Consists of a catalytic RNA component (M1 or rnpB) and a protein subunit.</text>
</comment>
<comment type="similarity">
    <text evidence="1">Belongs to the RnpA family.</text>
</comment>
<evidence type="ECO:0000255" key="1">
    <source>
        <dbReference type="HAMAP-Rule" id="MF_00227"/>
    </source>
</evidence>
<gene>
    <name evidence="1" type="primary">rnpA</name>
    <name type="ordered locus">ECDH10B_3890</name>
</gene>
<accession>B1X9T2</accession>